<keyword id="KW-0233">DNA recombination</keyword>
<keyword id="KW-0238">DNA-binding</keyword>
<keyword id="KW-0804">Transcription</keyword>
<keyword id="KW-0805">Transcription regulation</keyword>
<keyword id="KW-0810">Translation regulation</keyword>
<sequence length="99" mass="11214">MALTKAEMAERLFDEVGLNKREAKEFVDAFFDVLRDALEQGRQVKLSGFGNFDLRRKNQRPGRNPKTGEEIPISARTVVTFRPGQKLKERVEAYAGSGQ</sequence>
<evidence type="ECO:0000250" key="1"/>
<evidence type="ECO:0000305" key="2"/>
<feature type="chain" id="PRO_0000105033" description="Integration host factor subunit alpha">
    <location>
        <begin position="1"/>
        <end position="99"/>
    </location>
</feature>
<proteinExistence type="inferred from homology"/>
<dbReference type="EMBL" id="AE008923">
    <property type="protein sequence ID" value="AAM37437.1"/>
    <property type="molecule type" value="Genomic_DNA"/>
</dbReference>
<dbReference type="RefSeq" id="WP_002811076.1">
    <property type="nucleotide sequence ID" value="NC_003919.1"/>
</dbReference>
<dbReference type="SMR" id="P0A0U0"/>
<dbReference type="KEGG" id="xac:XAC2588"/>
<dbReference type="eggNOG" id="COG0776">
    <property type="taxonomic scope" value="Bacteria"/>
</dbReference>
<dbReference type="HOGENOM" id="CLU_105066_1_3_6"/>
<dbReference type="Proteomes" id="UP000000576">
    <property type="component" value="Chromosome"/>
</dbReference>
<dbReference type="GO" id="GO:0005829">
    <property type="term" value="C:cytosol"/>
    <property type="evidence" value="ECO:0007669"/>
    <property type="project" value="TreeGrafter"/>
</dbReference>
<dbReference type="GO" id="GO:0003677">
    <property type="term" value="F:DNA binding"/>
    <property type="evidence" value="ECO:0007669"/>
    <property type="project" value="UniProtKB-UniRule"/>
</dbReference>
<dbReference type="GO" id="GO:0030527">
    <property type="term" value="F:structural constituent of chromatin"/>
    <property type="evidence" value="ECO:0007669"/>
    <property type="project" value="InterPro"/>
</dbReference>
<dbReference type="GO" id="GO:0006310">
    <property type="term" value="P:DNA recombination"/>
    <property type="evidence" value="ECO:0007669"/>
    <property type="project" value="UniProtKB-UniRule"/>
</dbReference>
<dbReference type="GO" id="GO:0009893">
    <property type="term" value="P:positive regulation of metabolic process"/>
    <property type="evidence" value="ECO:0007669"/>
    <property type="project" value="UniProtKB-ARBA"/>
</dbReference>
<dbReference type="GO" id="GO:0006355">
    <property type="term" value="P:regulation of DNA-templated transcription"/>
    <property type="evidence" value="ECO:0007669"/>
    <property type="project" value="UniProtKB-UniRule"/>
</dbReference>
<dbReference type="GO" id="GO:0006417">
    <property type="term" value="P:regulation of translation"/>
    <property type="evidence" value="ECO:0007669"/>
    <property type="project" value="UniProtKB-UniRule"/>
</dbReference>
<dbReference type="CDD" id="cd13835">
    <property type="entry name" value="IHF_A"/>
    <property type="match status" value="1"/>
</dbReference>
<dbReference type="FunFam" id="4.10.520.10:FF:000002">
    <property type="entry name" value="Integration host factor subunit alpha"/>
    <property type="match status" value="1"/>
</dbReference>
<dbReference type="Gene3D" id="4.10.520.10">
    <property type="entry name" value="IHF-like DNA-binding proteins"/>
    <property type="match status" value="1"/>
</dbReference>
<dbReference type="HAMAP" id="MF_00380">
    <property type="entry name" value="IHF_alpha"/>
    <property type="match status" value="1"/>
</dbReference>
<dbReference type="InterPro" id="IPR000119">
    <property type="entry name" value="Hist_DNA-bd"/>
</dbReference>
<dbReference type="InterPro" id="IPR020816">
    <property type="entry name" value="Histone-like_DNA-bd_CS"/>
</dbReference>
<dbReference type="InterPro" id="IPR010992">
    <property type="entry name" value="IHF-like_DNA-bd_dom_sf"/>
</dbReference>
<dbReference type="InterPro" id="IPR005684">
    <property type="entry name" value="IHF_alpha"/>
</dbReference>
<dbReference type="NCBIfam" id="TIGR00987">
    <property type="entry name" value="himA"/>
    <property type="match status" value="1"/>
</dbReference>
<dbReference type="NCBIfam" id="NF001401">
    <property type="entry name" value="PRK00285.1"/>
    <property type="match status" value="1"/>
</dbReference>
<dbReference type="PANTHER" id="PTHR33175">
    <property type="entry name" value="DNA-BINDING PROTEIN HU"/>
    <property type="match status" value="1"/>
</dbReference>
<dbReference type="PANTHER" id="PTHR33175:SF2">
    <property type="entry name" value="INTEGRATION HOST FACTOR SUBUNIT ALPHA"/>
    <property type="match status" value="1"/>
</dbReference>
<dbReference type="Pfam" id="PF00216">
    <property type="entry name" value="Bac_DNA_binding"/>
    <property type="match status" value="1"/>
</dbReference>
<dbReference type="PRINTS" id="PR01727">
    <property type="entry name" value="DNABINDINGHU"/>
</dbReference>
<dbReference type="SMART" id="SM00411">
    <property type="entry name" value="BHL"/>
    <property type="match status" value="1"/>
</dbReference>
<dbReference type="SUPFAM" id="SSF47729">
    <property type="entry name" value="IHF-like DNA-binding proteins"/>
    <property type="match status" value="1"/>
</dbReference>
<dbReference type="PROSITE" id="PS00045">
    <property type="entry name" value="HISTONE_LIKE"/>
    <property type="match status" value="1"/>
</dbReference>
<organism>
    <name type="scientific">Xanthomonas axonopodis pv. citri (strain 306)</name>
    <dbReference type="NCBI Taxonomy" id="190486"/>
    <lineage>
        <taxon>Bacteria</taxon>
        <taxon>Pseudomonadati</taxon>
        <taxon>Pseudomonadota</taxon>
        <taxon>Gammaproteobacteria</taxon>
        <taxon>Lysobacterales</taxon>
        <taxon>Lysobacteraceae</taxon>
        <taxon>Xanthomonas</taxon>
    </lineage>
</organism>
<gene>
    <name type="primary">ihfA</name>
    <name type="synonym">gumA</name>
    <name type="synonym">himA</name>
    <name type="ordered locus">XAC2588</name>
</gene>
<reference key="1">
    <citation type="journal article" date="2002" name="Nature">
        <title>Comparison of the genomes of two Xanthomonas pathogens with differing host specificities.</title>
        <authorList>
            <person name="da Silva A.C.R."/>
            <person name="Ferro J.A."/>
            <person name="Reinach F.C."/>
            <person name="Farah C.S."/>
            <person name="Furlan L.R."/>
            <person name="Quaggio R.B."/>
            <person name="Monteiro-Vitorello C.B."/>
            <person name="Van Sluys M.A."/>
            <person name="Almeida N.F. Jr."/>
            <person name="Alves L.M.C."/>
            <person name="do Amaral A.M."/>
            <person name="Bertolini M.C."/>
            <person name="Camargo L.E.A."/>
            <person name="Camarotte G."/>
            <person name="Cannavan F."/>
            <person name="Cardozo J."/>
            <person name="Chambergo F."/>
            <person name="Ciapina L.P."/>
            <person name="Cicarelli R.M.B."/>
            <person name="Coutinho L.L."/>
            <person name="Cursino-Santos J.R."/>
            <person name="El-Dorry H."/>
            <person name="Faria J.B."/>
            <person name="Ferreira A.J.S."/>
            <person name="Ferreira R.C.C."/>
            <person name="Ferro M.I.T."/>
            <person name="Formighieri E.F."/>
            <person name="Franco M.C."/>
            <person name="Greggio C.C."/>
            <person name="Gruber A."/>
            <person name="Katsuyama A.M."/>
            <person name="Kishi L.T."/>
            <person name="Leite R.P."/>
            <person name="Lemos E.G.M."/>
            <person name="Lemos M.V.F."/>
            <person name="Locali E.C."/>
            <person name="Machado M.A."/>
            <person name="Madeira A.M.B.N."/>
            <person name="Martinez-Rossi N.M."/>
            <person name="Martins E.C."/>
            <person name="Meidanis J."/>
            <person name="Menck C.F.M."/>
            <person name="Miyaki C.Y."/>
            <person name="Moon D.H."/>
            <person name="Moreira L.M."/>
            <person name="Novo M.T.M."/>
            <person name="Okura V.K."/>
            <person name="Oliveira M.C."/>
            <person name="Oliveira V.R."/>
            <person name="Pereira H.A."/>
            <person name="Rossi A."/>
            <person name="Sena J.A.D."/>
            <person name="Silva C."/>
            <person name="de Souza R.F."/>
            <person name="Spinola L.A.F."/>
            <person name="Takita M.A."/>
            <person name="Tamura R.E."/>
            <person name="Teixeira E.C."/>
            <person name="Tezza R.I.D."/>
            <person name="Trindade dos Santos M."/>
            <person name="Truffi D."/>
            <person name="Tsai S.M."/>
            <person name="White F.F."/>
            <person name="Setubal J.C."/>
            <person name="Kitajima J.P."/>
        </authorList>
    </citation>
    <scope>NUCLEOTIDE SEQUENCE [LARGE SCALE GENOMIC DNA]</scope>
    <source>
        <strain>306</strain>
    </source>
</reference>
<accession>P0A0U0</accession>
<accession>Q56767</accession>
<name>IHFA_XANAC</name>
<protein>
    <recommendedName>
        <fullName>Integration host factor subunit alpha</fullName>
        <shortName>IHF-alpha</shortName>
    </recommendedName>
</protein>
<comment type="function">
    <text evidence="1">This protein is one of the two subunits of integration host factor, a specific DNA-binding protein that functions in genetic recombination as well as in transcriptional and translational control.</text>
</comment>
<comment type="subunit">
    <text evidence="1">Heterodimer of an alpha and a beta chain.</text>
</comment>
<comment type="similarity">
    <text evidence="2">Belongs to the bacterial histone-like protein family.</text>
</comment>